<proteinExistence type="inferred from homology"/>
<protein>
    <recommendedName>
        <fullName>Lysozyme C</fullName>
        <ecNumber>3.2.1.17</ecNumber>
    </recommendedName>
    <alternativeName>
        <fullName>1,4-beta-N-acetylmuramidase C</fullName>
    </alternativeName>
</protein>
<comment type="function">
    <text>Lysozymes have primarily a bacteriolytic function; those in tissues and body fluids are associated with the monocyte-macrophage system and enhance the activity of immunoagents.</text>
</comment>
<comment type="catalytic activity">
    <reaction>
        <text>Hydrolysis of (1-&gt;4)-beta-linkages between N-acetylmuramic acid and N-acetyl-D-glucosamine residues in a peptidoglycan and between N-acetyl-D-glucosamine residues in chitodextrins.</text>
        <dbReference type="EC" id="3.2.1.17"/>
    </reaction>
</comment>
<comment type="subunit">
    <text>Monomer.</text>
</comment>
<comment type="miscellaneous">
    <text>Lysozyme C is capable of both hydrolysis and transglycosylation; it also shows a slight esterase activity. It acts rapidly on both peptide-substituted and unsubstituted peptidoglycan, and slowly on chitin oligosaccharides.</text>
</comment>
<comment type="similarity">
    <text evidence="2">Belongs to the glycosyl hydrolase 22 family.</text>
</comment>
<reference key="1">
    <citation type="journal article" date="1997" name="Nature">
        <title>Episodic adaptive evolution of primate lysozymes.</title>
        <authorList>
            <person name="Messier W."/>
            <person name="Stewart C.B."/>
        </authorList>
    </citation>
    <scope>NUCLEOTIDE SEQUENCE [GENOMIC DNA]</scope>
    <source>
        <tissue>Blood</tissue>
    </source>
</reference>
<gene>
    <name type="primary">LYZ</name>
    <name type="synonym">LZM</name>
</gene>
<accession>P61631</accession>
<accession>P79151</accession>
<accession>P79698</accession>
<dbReference type="EC" id="3.2.1.17"/>
<dbReference type="EMBL" id="U76937">
    <property type="protein sequence ID" value="AAB41215.1"/>
    <property type="molecule type" value="Genomic_DNA"/>
</dbReference>
<dbReference type="EMBL" id="U76934">
    <property type="protein sequence ID" value="AAB41215.1"/>
    <property type="status" value="JOINED"/>
    <property type="molecule type" value="Genomic_DNA"/>
</dbReference>
<dbReference type="EMBL" id="U76935">
    <property type="protein sequence ID" value="AAB41215.1"/>
    <property type="status" value="JOINED"/>
    <property type="molecule type" value="Genomic_DNA"/>
</dbReference>
<dbReference type="EMBL" id="U76936">
    <property type="protein sequence ID" value="AAB41215.1"/>
    <property type="status" value="JOINED"/>
    <property type="molecule type" value="Genomic_DNA"/>
</dbReference>
<dbReference type="SMR" id="P61631"/>
<dbReference type="CAZy" id="GH22">
    <property type="family name" value="Glycoside Hydrolase Family 22"/>
</dbReference>
<dbReference type="OMA" id="GCHIMCE"/>
<dbReference type="GO" id="GO:0003796">
    <property type="term" value="F:lysozyme activity"/>
    <property type="evidence" value="ECO:0007669"/>
    <property type="project" value="UniProtKB-EC"/>
</dbReference>
<dbReference type="GO" id="GO:0050829">
    <property type="term" value="P:defense response to Gram-negative bacterium"/>
    <property type="evidence" value="ECO:0007669"/>
    <property type="project" value="TreeGrafter"/>
</dbReference>
<dbReference type="GO" id="GO:0050830">
    <property type="term" value="P:defense response to Gram-positive bacterium"/>
    <property type="evidence" value="ECO:0007669"/>
    <property type="project" value="TreeGrafter"/>
</dbReference>
<dbReference type="GO" id="GO:0031640">
    <property type="term" value="P:killing of cells of another organism"/>
    <property type="evidence" value="ECO:0007669"/>
    <property type="project" value="UniProtKB-KW"/>
</dbReference>
<dbReference type="CDD" id="cd16897">
    <property type="entry name" value="LYZ_C"/>
    <property type="match status" value="1"/>
</dbReference>
<dbReference type="FunFam" id="1.10.530.10:FF:000001">
    <property type="entry name" value="Lysozyme C"/>
    <property type="match status" value="1"/>
</dbReference>
<dbReference type="Gene3D" id="1.10.530.10">
    <property type="match status" value="1"/>
</dbReference>
<dbReference type="InterPro" id="IPR001916">
    <property type="entry name" value="Glyco_hydro_22"/>
</dbReference>
<dbReference type="InterPro" id="IPR019799">
    <property type="entry name" value="Glyco_hydro_22_CS"/>
</dbReference>
<dbReference type="InterPro" id="IPR000974">
    <property type="entry name" value="Glyco_hydro_22_lys"/>
</dbReference>
<dbReference type="InterPro" id="IPR023346">
    <property type="entry name" value="Lysozyme-like_dom_sf"/>
</dbReference>
<dbReference type="PANTHER" id="PTHR11407">
    <property type="entry name" value="LYSOZYME C"/>
    <property type="match status" value="1"/>
</dbReference>
<dbReference type="PANTHER" id="PTHR11407:SF28">
    <property type="entry name" value="LYSOZYME C"/>
    <property type="match status" value="1"/>
</dbReference>
<dbReference type="Pfam" id="PF00062">
    <property type="entry name" value="Lys"/>
    <property type="match status" value="1"/>
</dbReference>
<dbReference type="PRINTS" id="PR00137">
    <property type="entry name" value="LYSOZYME"/>
</dbReference>
<dbReference type="PRINTS" id="PR00135">
    <property type="entry name" value="LYZLACT"/>
</dbReference>
<dbReference type="SMART" id="SM00263">
    <property type="entry name" value="LYZ1"/>
    <property type="match status" value="1"/>
</dbReference>
<dbReference type="SUPFAM" id="SSF53955">
    <property type="entry name" value="Lysozyme-like"/>
    <property type="match status" value="1"/>
</dbReference>
<dbReference type="PROSITE" id="PS00128">
    <property type="entry name" value="GLYCOSYL_HYDROL_F22_1"/>
    <property type="match status" value="1"/>
</dbReference>
<dbReference type="PROSITE" id="PS51348">
    <property type="entry name" value="GLYCOSYL_HYDROL_F22_2"/>
    <property type="match status" value="1"/>
</dbReference>
<sequence>MKALIILGLVLLSVTVQGKIFERCELARTLKKLGLDGYKGVSLANWVCLAKWESGYNTDATNYNPGDESTDYGIFQINSRYWCNNGKTPGAVNACHISCNALLQNNIADAVACAKRVVSDPQGIRAWVAWKKHCQNRDVSQYVEGCGV</sequence>
<feature type="signal peptide" evidence="1">
    <location>
        <begin position="1"/>
        <end position="18"/>
    </location>
</feature>
<feature type="chain" id="PRO_0000018462" description="Lysozyme C">
    <location>
        <begin position="19"/>
        <end position="148"/>
    </location>
</feature>
<feature type="domain" description="C-type lysozyme" evidence="2">
    <location>
        <begin position="19"/>
        <end position="148"/>
    </location>
</feature>
<feature type="active site" evidence="2">
    <location>
        <position position="53"/>
    </location>
</feature>
<feature type="active site" evidence="2">
    <location>
        <position position="71"/>
    </location>
</feature>
<feature type="disulfide bond" evidence="2">
    <location>
        <begin position="24"/>
        <end position="146"/>
    </location>
</feature>
<feature type="disulfide bond" evidence="2">
    <location>
        <begin position="48"/>
        <end position="134"/>
    </location>
</feature>
<feature type="disulfide bond" evidence="2">
    <location>
        <begin position="83"/>
        <end position="99"/>
    </location>
</feature>
<feature type="disulfide bond" evidence="2">
    <location>
        <begin position="95"/>
        <end position="113"/>
    </location>
</feature>
<organism>
    <name type="scientific">Colobus angolensis</name>
    <name type="common">Angolan colobus</name>
    <dbReference type="NCBI Taxonomy" id="54131"/>
    <lineage>
        <taxon>Eukaryota</taxon>
        <taxon>Metazoa</taxon>
        <taxon>Chordata</taxon>
        <taxon>Craniata</taxon>
        <taxon>Vertebrata</taxon>
        <taxon>Euteleostomi</taxon>
        <taxon>Mammalia</taxon>
        <taxon>Eutheria</taxon>
        <taxon>Euarchontoglires</taxon>
        <taxon>Primates</taxon>
        <taxon>Haplorrhini</taxon>
        <taxon>Catarrhini</taxon>
        <taxon>Cercopithecidae</taxon>
        <taxon>Colobinae</taxon>
        <taxon>Colobus</taxon>
    </lineage>
</organism>
<name>LYSC_COLAN</name>
<keyword id="KW-0929">Antimicrobial</keyword>
<keyword id="KW-0081">Bacteriolytic enzyme</keyword>
<keyword id="KW-1015">Disulfide bond</keyword>
<keyword id="KW-0326">Glycosidase</keyword>
<keyword id="KW-0378">Hydrolase</keyword>
<keyword id="KW-0732">Signal</keyword>
<evidence type="ECO:0000250" key="1"/>
<evidence type="ECO:0000255" key="2">
    <source>
        <dbReference type="PROSITE-ProRule" id="PRU00680"/>
    </source>
</evidence>